<accession>Q310A3</accession>
<organism>
    <name type="scientific">Oleidesulfovibrio alaskensis (strain ATCC BAA-1058 / DSM 17464 / G20)</name>
    <name type="common">Desulfovibrio alaskensis</name>
    <dbReference type="NCBI Taxonomy" id="207559"/>
    <lineage>
        <taxon>Bacteria</taxon>
        <taxon>Pseudomonadati</taxon>
        <taxon>Thermodesulfobacteriota</taxon>
        <taxon>Desulfovibrionia</taxon>
        <taxon>Desulfovibrionales</taxon>
        <taxon>Desulfovibrionaceae</taxon>
        <taxon>Oleidesulfovibrio</taxon>
    </lineage>
</organism>
<comment type="function">
    <text evidence="1">Catalyzes the dephosphorylation of undecaprenyl diphosphate (UPP). Confers resistance to bacitracin.</text>
</comment>
<comment type="catalytic activity">
    <reaction evidence="1">
        <text>di-trans,octa-cis-undecaprenyl diphosphate + H2O = di-trans,octa-cis-undecaprenyl phosphate + phosphate + H(+)</text>
        <dbReference type="Rhea" id="RHEA:28094"/>
        <dbReference type="ChEBI" id="CHEBI:15377"/>
        <dbReference type="ChEBI" id="CHEBI:15378"/>
        <dbReference type="ChEBI" id="CHEBI:43474"/>
        <dbReference type="ChEBI" id="CHEBI:58405"/>
        <dbReference type="ChEBI" id="CHEBI:60392"/>
        <dbReference type="EC" id="3.6.1.27"/>
    </reaction>
</comment>
<comment type="subcellular location">
    <subcellularLocation>
        <location evidence="1">Cell inner membrane</location>
        <topology evidence="1">Multi-pass membrane protein</topology>
    </subcellularLocation>
</comment>
<comment type="miscellaneous">
    <text>Bacitracin is thought to be involved in the inhibition of peptidoglycan synthesis by sequestering undecaprenyl diphosphate, thereby reducing the pool of lipid carrier available.</text>
</comment>
<comment type="similarity">
    <text evidence="1">Belongs to the UppP family.</text>
</comment>
<gene>
    <name evidence="1" type="primary">uppP</name>
    <name type="ordered locus">Dde_1946</name>
</gene>
<sequence>MTDLLTAAVLGLVEGLTEFLPVSSTGHLIITGYLLEYTGPKAESFQVAIQLGAILAVVFLYKERFAALFRFGTGHGRFSGLRGWYLLALTSAPASVLGLLTHSFIKEHLFGPVTVAWALAAGALYILAVEHKGEGTRYETLDDVSPALALGIGMFQCLALWPGFSRSAATIMGALLLGSRRRLAAEYSFVAAVPIMFAATGYDMYKSYSLFSPADIPFWAVGLLVSFASAWAAVKGFIHLVGRVTFRPFAWYRLALAPVVLLFWS</sequence>
<evidence type="ECO:0000255" key="1">
    <source>
        <dbReference type="HAMAP-Rule" id="MF_01006"/>
    </source>
</evidence>
<dbReference type="EC" id="3.6.1.27" evidence="1"/>
<dbReference type="EMBL" id="CP000112">
    <property type="protein sequence ID" value="ABB38743.1"/>
    <property type="molecule type" value="Genomic_DNA"/>
</dbReference>
<dbReference type="RefSeq" id="WP_011367861.1">
    <property type="nucleotide sequence ID" value="NC_007519.1"/>
</dbReference>
<dbReference type="SMR" id="Q310A3"/>
<dbReference type="STRING" id="207559.Dde_1946"/>
<dbReference type="KEGG" id="dde:Dde_1946"/>
<dbReference type="eggNOG" id="COG1968">
    <property type="taxonomic scope" value="Bacteria"/>
</dbReference>
<dbReference type="HOGENOM" id="CLU_060296_2_0_7"/>
<dbReference type="Proteomes" id="UP000002710">
    <property type="component" value="Chromosome"/>
</dbReference>
<dbReference type="GO" id="GO:0005886">
    <property type="term" value="C:plasma membrane"/>
    <property type="evidence" value="ECO:0007669"/>
    <property type="project" value="UniProtKB-SubCell"/>
</dbReference>
<dbReference type="GO" id="GO:0050380">
    <property type="term" value="F:undecaprenyl-diphosphatase activity"/>
    <property type="evidence" value="ECO:0007669"/>
    <property type="project" value="UniProtKB-UniRule"/>
</dbReference>
<dbReference type="GO" id="GO:0071555">
    <property type="term" value="P:cell wall organization"/>
    <property type="evidence" value="ECO:0007669"/>
    <property type="project" value="UniProtKB-KW"/>
</dbReference>
<dbReference type="GO" id="GO:0009252">
    <property type="term" value="P:peptidoglycan biosynthetic process"/>
    <property type="evidence" value="ECO:0007669"/>
    <property type="project" value="UniProtKB-KW"/>
</dbReference>
<dbReference type="GO" id="GO:0008360">
    <property type="term" value="P:regulation of cell shape"/>
    <property type="evidence" value="ECO:0007669"/>
    <property type="project" value="UniProtKB-KW"/>
</dbReference>
<dbReference type="GO" id="GO:0046677">
    <property type="term" value="P:response to antibiotic"/>
    <property type="evidence" value="ECO:0007669"/>
    <property type="project" value="UniProtKB-UniRule"/>
</dbReference>
<dbReference type="HAMAP" id="MF_01006">
    <property type="entry name" value="Undec_diphosphatase"/>
    <property type="match status" value="1"/>
</dbReference>
<dbReference type="InterPro" id="IPR003824">
    <property type="entry name" value="UppP"/>
</dbReference>
<dbReference type="NCBIfam" id="NF001389">
    <property type="entry name" value="PRK00281.1-2"/>
    <property type="match status" value="1"/>
</dbReference>
<dbReference type="NCBIfam" id="NF001390">
    <property type="entry name" value="PRK00281.1-4"/>
    <property type="match status" value="1"/>
</dbReference>
<dbReference type="NCBIfam" id="TIGR00753">
    <property type="entry name" value="undec_PP_bacA"/>
    <property type="match status" value="1"/>
</dbReference>
<dbReference type="PANTHER" id="PTHR30622">
    <property type="entry name" value="UNDECAPRENYL-DIPHOSPHATASE"/>
    <property type="match status" value="1"/>
</dbReference>
<dbReference type="PANTHER" id="PTHR30622:SF3">
    <property type="entry name" value="UNDECAPRENYL-DIPHOSPHATASE"/>
    <property type="match status" value="1"/>
</dbReference>
<dbReference type="Pfam" id="PF02673">
    <property type="entry name" value="BacA"/>
    <property type="match status" value="1"/>
</dbReference>
<name>UPPP_OLEA2</name>
<reference key="1">
    <citation type="journal article" date="2011" name="J. Bacteriol.">
        <title>Complete genome sequence and updated annotation of Desulfovibrio alaskensis G20.</title>
        <authorList>
            <person name="Hauser L.J."/>
            <person name="Land M.L."/>
            <person name="Brown S.D."/>
            <person name="Larimer F."/>
            <person name="Keller K.L."/>
            <person name="Rapp-Giles B.J."/>
            <person name="Price M.N."/>
            <person name="Lin M."/>
            <person name="Bruce D.C."/>
            <person name="Detter J.C."/>
            <person name="Tapia R."/>
            <person name="Han C.S."/>
            <person name="Goodwin L.A."/>
            <person name="Cheng J.F."/>
            <person name="Pitluck S."/>
            <person name="Copeland A."/>
            <person name="Lucas S."/>
            <person name="Nolan M."/>
            <person name="Lapidus A.L."/>
            <person name="Palumbo A.V."/>
            <person name="Wall J.D."/>
        </authorList>
    </citation>
    <scope>NUCLEOTIDE SEQUENCE [LARGE SCALE GENOMIC DNA]</scope>
    <source>
        <strain>ATCC BAA-1058 / DSM 17464 / G20</strain>
    </source>
</reference>
<proteinExistence type="inferred from homology"/>
<feature type="chain" id="PRO_0000227618" description="Undecaprenyl-diphosphatase">
    <location>
        <begin position="1"/>
        <end position="265"/>
    </location>
</feature>
<feature type="transmembrane region" description="Helical" evidence="1">
    <location>
        <begin position="15"/>
        <end position="37"/>
    </location>
</feature>
<feature type="transmembrane region" description="Helical" evidence="1">
    <location>
        <begin position="41"/>
        <end position="61"/>
    </location>
</feature>
<feature type="transmembrane region" description="Helical" evidence="1">
    <location>
        <begin position="85"/>
        <end position="105"/>
    </location>
</feature>
<feature type="transmembrane region" description="Helical" evidence="1">
    <location>
        <begin position="109"/>
        <end position="129"/>
    </location>
</feature>
<feature type="transmembrane region" description="Helical" evidence="1">
    <location>
        <begin position="144"/>
        <end position="164"/>
    </location>
</feature>
<feature type="transmembrane region" description="Helical" evidence="1">
    <location>
        <begin position="183"/>
        <end position="203"/>
    </location>
</feature>
<feature type="transmembrane region" description="Helical" evidence="1">
    <location>
        <begin position="218"/>
        <end position="238"/>
    </location>
</feature>
<feature type="transmembrane region" description="Helical" evidence="1">
    <location>
        <begin position="244"/>
        <end position="264"/>
    </location>
</feature>
<keyword id="KW-0046">Antibiotic resistance</keyword>
<keyword id="KW-0997">Cell inner membrane</keyword>
<keyword id="KW-1003">Cell membrane</keyword>
<keyword id="KW-0133">Cell shape</keyword>
<keyword id="KW-0961">Cell wall biogenesis/degradation</keyword>
<keyword id="KW-0378">Hydrolase</keyword>
<keyword id="KW-0472">Membrane</keyword>
<keyword id="KW-0573">Peptidoglycan synthesis</keyword>
<keyword id="KW-1185">Reference proteome</keyword>
<keyword id="KW-0812">Transmembrane</keyword>
<keyword id="KW-1133">Transmembrane helix</keyword>
<protein>
    <recommendedName>
        <fullName evidence="1">Undecaprenyl-diphosphatase</fullName>
        <ecNumber evidence="1">3.6.1.27</ecNumber>
    </recommendedName>
    <alternativeName>
        <fullName evidence="1">Bacitracin resistance protein</fullName>
    </alternativeName>
    <alternativeName>
        <fullName evidence="1">Undecaprenyl pyrophosphate phosphatase</fullName>
    </alternativeName>
</protein>